<feature type="signal peptide" evidence="2">
    <location>
        <begin position="1"/>
        <end position="33"/>
    </location>
</feature>
<feature type="chain" id="PRO_0000017039" description="Beta-lactamase ROB-1">
    <location>
        <begin position="34"/>
        <end position="305"/>
    </location>
</feature>
<feature type="active site" description="Acyl-ester intermediate" evidence="3">
    <location>
        <position position="86"/>
    </location>
</feature>
<feature type="binding site" evidence="1">
    <location>
        <begin position="248"/>
        <end position="250"/>
    </location>
    <ligand>
        <name>substrate</name>
    </ligand>
</feature>
<sequence>MLNKLKIGTLLLLTLTACSPNSVHSVTSNPQPASAPVQQSATQATFQQTLANLEQQYQARIGVYVWDTETGHSLSYRADERFAYASTFKALLAGAVLQSLPEKDLNRTISYSQKDLVSYSPETQKYVGKGMTIAQLCEAAVRFSDNSATNLLLKELGGVEQYQRILRQLGDNVTHTNRLEPDLNQAKPNDIRDTSTPKQMAMNLNAYLLGNTLTESQKTILWNWLDNNATGNPLIRAATPTSWKVYDKSGAGKYGVRNDIAVVRIPNRKPIVMAIMSTQFTEEAKFNNKLVEDAAKQVFHTLQLN</sequence>
<comment type="catalytic activity">
    <reaction evidence="3">
        <text>a beta-lactam + H2O = a substituted beta-amino acid</text>
        <dbReference type="Rhea" id="RHEA:20401"/>
        <dbReference type="ChEBI" id="CHEBI:15377"/>
        <dbReference type="ChEBI" id="CHEBI:35627"/>
        <dbReference type="ChEBI" id="CHEBI:140347"/>
        <dbReference type="EC" id="3.5.2.6"/>
    </reaction>
</comment>
<comment type="miscellaneous">
    <text evidence="5">The class A beta-lactamase family has a specific amino-acid numbering system, sometimes called Ambler or ABL numbering and often misspelt as Amber. A multiple sequence alignment was used to derive a consensus sequence and then the consensus was numbered taking into account insertions and deletions. This allows use of identical numbers, e.g. for active site residues, despite differences in protein length. UniProt always uses natural numbering of residues, hence there appear to be differences in numbering between this entry and some papers.</text>
</comment>
<comment type="similarity">
    <text evidence="4">Belongs to the class-A beta-lactamase family.</text>
</comment>
<proteinExistence type="inferred from homology"/>
<geneLocation type="plasmid">
    <name>RRob</name>
</geneLocation>
<accession>P67920</accession>
<accession>P33949</accession>
<gene>
    <name type="primary">rob1</name>
    <name type="synonym">bla</name>
</gene>
<organism>
    <name type="scientific">Actinobacillus pleuropneumoniae</name>
    <name type="common">Haemophilus pleuropneumoniae</name>
    <dbReference type="NCBI Taxonomy" id="715"/>
    <lineage>
        <taxon>Bacteria</taxon>
        <taxon>Pseudomonadati</taxon>
        <taxon>Pseudomonadota</taxon>
        <taxon>Gammaproteobacteria</taxon>
        <taxon>Pasteurellales</taxon>
        <taxon>Pasteurellaceae</taxon>
        <taxon>Actinobacillus</taxon>
    </lineage>
</organism>
<name>BLA1_ACTPL</name>
<dbReference type="EC" id="3.5.2.6"/>
<dbReference type="EMBL" id="S51028">
    <property type="protein sequence ID" value="AAB24384.1"/>
    <property type="molecule type" value="Genomic_DNA"/>
</dbReference>
<dbReference type="PIR" id="A57002">
    <property type="entry name" value="A57002"/>
</dbReference>
<dbReference type="RefSeq" id="YP_001941143.1">
    <property type="nucleotide sequence ID" value="NC_010795.1"/>
</dbReference>
<dbReference type="SMR" id="P67920"/>
<dbReference type="GO" id="GO:0008800">
    <property type="term" value="F:beta-lactamase activity"/>
    <property type="evidence" value="ECO:0007669"/>
    <property type="project" value="UniProtKB-EC"/>
</dbReference>
<dbReference type="GO" id="GO:0030655">
    <property type="term" value="P:beta-lactam antibiotic catabolic process"/>
    <property type="evidence" value="ECO:0007669"/>
    <property type="project" value="InterPro"/>
</dbReference>
<dbReference type="GO" id="GO:0046677">
    <property type="term" value="P:response to antibiotic"/>
    <property type="evidence" value="ECO:0007669"/>
    <property type="project" value="UniProtKB-KW"/>
</dbReference>
<dbReference type="Gene3D" id="3.40.710.10">
    <property type="entry name" value="DD-peptidase/beta-lactamase superfamily"/>
    <property type="match status" value="1"/>
</dbReference>
<dbReference type="InterPro" id="IPR012338">
    <property type="entry name" value="Beta-lactam/transpept-like"/>
</dbReference>
<dbReference type="InterPro" id="IPR045155">
    <property type="entry name" value="Beta-lactam_cat"/>
</dbReference>
<dbReference type="InterPro" id="IPR000871">
    <property type="entry name" value="Beta-lactam_class-A"/>
</dbReference>
<dbReference type="InterPro" id="IPR023650">
    <property type="entry name" value="Beta-lactam_class-A_AS"/>
</dbReference>
<dbReference type="NCBIfam" id="NF033103">
    <property type="entry name" value="bla_class_A"/>
    <property type="match status" value="1"/>
</dbReference>
<dbReference type="NCBIfam" id="NF033568">
    <property type="entry name" value="blaROB"/>
    <property type="match status" value="1"/>
</dbReference>
<dbReference type="PANTHER" id="PTHR35333">
    <property type="entry name" value="BETA-LACTAMASE"/>
    <property type="match status" value="1"/>
</dbReference>
<dbReference type="PANTHER" id="PTHR35333:SF3">
    <property type="entry name" value="BETA-LACTAMASE-TYPE TRANSPEPTIDASE FOLD CONTAINING PROTEIN"/>
    <property type="match status" value="1"/>
</dbReference>
<dbReference type="Pfam" id="PF13354">
    <property type="entry name" value="Beta-lactamase2"/>
    <property type="match status" value="1"/>
</dbReference>
<dbReference type="PRINTS" id="PR00118">
    <property type="entry name" value="BLACTAMASEA"/>
</dbReference>
<dbReference type="SUPFAM" id="SSF56601">
    <property type="entry name" value="beta-lactamase/transpeptidase-like"/>
    <property type="match status" value="1"/>
</dbReference>
<dbReference type="PROSITE" id="PS00146">
    <property type="entry name" value="BETA_LACTAMASE_A"/>
    <property type="match status" value="1"/>
</dbReference>
<evidence type="ECO:0000250" key="1"/>
<evidence type="ECO:0000255" key="2"/>
<evidence type="ECO:0000255" key="3">
    <source>
        <dbReference type="PROSITE-ProRule" id="PRU10101"/>
    </source>
</evidence>
<evidence type="ECO:0000305" key="4"/>
<evidence type="ECO:0000305" key="5">
    <source>
    </source>
</evidence>
<keyword id="KW-0046">Antibiotic resistance</keyword>
<keyword id="KW-0378">Hydrolase</keyword>
<keyword id="KW-0614">Plasmid</keyword>
<keyword id="KW-0732">Signal</keyword>
<reference key="1">
    <citation type="journal article" date="1992" name="Vet. Microbiol.">
        <title>Sequence analysis of the ROB-1 beta-lactamase gene from Actinobacillus pleuropneumoniae.</title>
        <authorList>
            <person name="Chang Y.-F."/>
            <person name="Shi J."/>
            <person name="Shin S.J."/>
            <person name="Lein D.H."/>
        </authorList>
    </citation>
    <scope>NUCLEOTIDE SEQUENCE [GENOMIC DNA]</scope>
</reference>
<reference key="2">
    <citation type="journal article" date="1991" name="Biochem. J.">
        <title>A standard numbering scheme for the class A beta-lactamases.</title>
        <authorList>
            <person name="Ambler R.P."/>
            <person name="Coulson A.F."/>
            <person name="Frere J.M."/>
            <person name="Ghuysen J.M."/>
            <person name="Joris B."/>
            <person name="Forsman M."/>
            <person name="Levesque R.C."/>
            <person name="Tiraby G."/>
            <person name="Waley S.G."/>
        </authorList>
    </citation>
    <scope>AMINO ACID NUMBERING SCHEME</scope>
</reference>
<protein>
    <recommendedName>
        <fullName>Beta-lactamase ROB-1</fullName>
        <ecNumber>3.5.2.6</ecNumber>
    </recommendedName>
</protein>